<feature type="chain" id="PRO_1000188957" description="G/U mismatch-specific DNA glycosylase">
    <location>
        <begin position="1"/>
        <end position="168"/>
    </location>
</feature>
<evidence type="ECO:0000255" key="1">
    <source>
        <dbReference type="HAMAP-Rule" id="MF_01956"/>
    </source>
</evidence>
<protein>
    <recommendedName>
        <fullName evidence="1">G/U mismatch-specific DNA glycosylase</fullName>
        <ecNumber evidence="1">3.2.2.28</ecNumber>
    </recommendedName>
    <alternativeName>
        <fullName evidence="1">Double-strand-specific uracil glycosylase</fullName>
    </alternativeName>
    <alternativeName>
        <fullName evidence="1">Mismatch-specific uracil DNA-glycosylase</fullName>
        <shortName evidence="1">MUG</shortName>
    </alternativeName>
</protein>
<organism>
    <name type="scientific">Escherichia coli O17:K52:H18 (strain UMN026 / ExPEC)</name>
    <dbReference type="NCBI Taxonomy" id="585056"/>
    <lineage>
        <taxon>Bacteria</taxon>
        <taxon>Pseudomonadati</taxon>
        <taxon>Pseudomonadota</taxon>
        <taxon>Gammaproteobacteria</taxon>
        <taxon>Enterobacterales</taxon>
        <taxon>Enterobacteriaceae</taxon>
        <taxon>Escherichia</taxon>
    </lineage>
</organism>
<sequence length="168" mass="18673">MVEDILAPGLRVVFCGINPGLSSAGTGFPFAHPANRFWKVIYQAGFTDRQLKPQEAQHLLDYRCGVTKLVDRPTVQANEVSKQELHAGGRKLIEKIEDYQPQALAILGKQAYEQGFSQRGAQWGKQTLTIGSTQIWVLPNPSGLSRVSLEKLVEAYRELDQALVVRGR</sequence>
<reference key="1">
    <citation type="journal article" date="2009" name="PLoS Genet.">
        <title>Organised genome dynamics in the Escherichia coli species results in highly diverse adaptive paths.</title>
        <authorList>
            <person name="Touchon M."/>
            <person name="Hoede C."/>
            <person name="Tenaillon O."/>
            <person name="Barbe V."/>
            <person name="Baeriswyl S."/>
            <person name="Bidet P."/>
            <person name="Bingen E."/>
            <person name="Bonacorsi S."/>
            <person name="Bouchier C."/>
            <person name="Bouvet O."/>
            <person name="Calteau A."/>
            <person name="Chiapello H."/>
            <person name="Clermont O."/>
            <person name="Cruveiller S."/>
            <person name="Danchin A."/>
            <person name="Diard M."/>
            <person name="Dossat C."/>
            <person name="Karoui M.E."/>
            <person name="Frapy E."/>
            <person name="Garry L."/>
            <person name="Ghigo J.M."/>
            <person name="Gilles A.M."/>
            <person name="Johnson J."/>
            <person name="Le Bouguenec C."/>
            <person name="Lescat M."/>
            <person name="Mangenot S."/>
            <person name="Martinez-Jehanne V."/>
            <person name="Matic I."/>
            <person name="Nassif X."/>
            <person name="Oztas S."/>
            <person name="Petit M.A."/>
            <person name="Pichon C."/>
            <person name="Rouy Z."/>
            <person name="Ruf C.S."/>
            <person name="Schneider D."/>
            <person name="Tourret J."/>
            <person name="Vacherie B."/>
            <person name="Vallenet D."/>
            <person name="Medigue C."/>
            <person name="Rocha E.P.C."/>
            <person name="Denamur E."/>
        </authorList>
    </citation>
    <scope>NUCLEOTIDE SEQUENCE [LARGE SCALE GENOMIC DNA]</scope>
    <source>
        <strain>UMN026 / ExPEC</strain>
    </source>
</reference>
<proteinExistence type="inferred from homology"/>
<comment type="function">
    <text evidence="1">Excises ethenocytosine and uracil, which can arise by alkylation or deamination of cytosine, respectively, from the corresponding mispairs with guanine in ds-DNA. It is capable of hydrolyzing the carbon-nitrogen bond between the sugar-phosphate backbone of the DNA and the mispaired base. The complementary strand guanine functions in substrate recognition. Required for DNA damage lesion repair in stationary-phase cells.</text>
</comment>
<comment type="catalytic activity">
    <reaction evidence="1">
        <text>Specifically hydrolyzes mismatched double-stranded DNA and polynucleotides, releasing free uracil.</text>
        <dbReference type="EC" id="3.2.2.28"/>
    </reaction>
</comment>
<comment type="subunit">
    <text evidence="1">Binds DNA as a monomer.</text>
</comment>
<comment type="subcellular location">
    <subcellularLocation>
        <location evidence="1">Cytoplasm</location>
    </subcellularLocation>
</comment>
<comment type="similarity">
    <text evidence="1">Belongs to the uracil-DNA glycosylase (UDG) superfamily. TDG/mug family.</text>
</comment>
<name>MUG_ECOLU</name>
<gene>
    <name evidence="1" type="primary">mug</name>
    <name type="ordered locus">ECUMN_3552</name>
</gene>
<accession>B7ND57</accession>
<keyword id="KW-0963">Cytoplasm</keyword>
<keyword id="KW-0227">DNA damage</keyword>
<keyword id="KW-0228">DNA excision</keyword>
<keyword id="KW-0234">DNA repair</keyword>
<keyword id="KW-0238">DNA-binding</keyword>
<keyword id="KW-0378">Hydrolase</keyword>
<dbReference type="EC" id="3.2.2.28" evidence="1"/>
<dbReference type="EMBL" id="CU928163">
    <property type="protein sequence ID" value="CAR14707.1"/>
    <property type="molecule type" value="Genomic_DNA"/>
</dbReference>
<dbReference type="RefSeq" id="WP_000228937.1">
    <property type="nucleotide sequence ID" value="NC_011751.1"/>
</dbReference>
<dbReference type="RefSeq" id="YP_002414212.1">
    <property type="nucleotide sequence ID" value="NC_011751.1"/>
</dbReference>
<dbReference type="SMR" id="B7ND57"/>
<dbReference type="STRING" id="585056.ECUMN_3552"/>
<dbReference type="GeneID" id="93778924"/>
<dbReference type="KEGG" id="eum:ECUMN_3552"/>
<dbReference type="PATRIC" id="fig|585056.7.peg.3727"/>
<dbReference type="HOGENOM" id="CLU_042829_3_1_6"/>
<dbReference type="Proteomes" id="UP000007097">
    <property type="component" value="Chromosome"/>
</dbReference>
<dbReference type="GO" id="GO:0005737">
    <property type="term" value="C:cytoplasm"/>
    <property type="evidence" value="ECO:0007669"/>
    <property type="project" value="UniProtKB-SubCell"/>
</dbReference>
<dbReference type="GO" id="GO:0003677">
    <property type="term" value="F:DNA binding"/>
    <property type="evidence" value="ECO:0007669"/>
    <property type="project" value="UniProtKB-KW"/>
</dbReference>
<dbReference type="GO" id="GO:0008263">
    <property type="term" value="F:pyrimidine-specific mismatch base pair DNA N-glycosylase activity"/>
    <property type="evidence" value="ECO:0007669"/>
    <property type="project" value="UniProtKB-UniRule"/>
</dbReference>
<dbReference type="GO" id="GO:0004844">
    <property type="term" value="F:uracil DNA N-glycosylase activity"/>
    <property type="evidence" value="ECO:0007669"/>
    <property type="project" value="TreeGrafter"/>
</dbReference>
<dbReference type="GO" id="GO:0006285">
    <property type="term" value="P:base-excision repair, AP site formation"/>
    <property type="evidence" value="ECO:0007669"/>
    <property type="project" value="UniProtKB-UniRule"/>
</dbReference>
<dbReference type="CDD" id="cd10028">
    <property type="entry name" value="UDG-F2_TDG_MUG"/>
    <property type="match status" value="1"/>
</dbReference>
<dbReference type="FunFam" id="3.40.470.10:FF:000003">
    <property type="entry name" value="G/U mismatch-specific DNA glycosylase"/>
    <property type="match status" value="1"/>
</dbReference>
<dbReference type="Gene3D" id="3.40.470.10">
    <property type="entry name" value="Uracil-DNA glycosylase-like domain"/>
    <property type="match status" value="1"/>
</dbReference>
<dbReference type="HAMAP" id="MF_01956">
    <property type="entry name" value="MUG"/>
    <property type="match status" value="1"/>
</dbReference>
<dbReference type="InterPro" id="IPR015637">
    <property type="entry name" value="MUG/TDG"/>
</dbReference>
<dbReference type="InterPro" id="IPR023502">
    <property type="entry name" value="MUG_bact"/>
</dbReference>
<dbReference type="InterPro" id="IPR005122">
    <property type="entry name" value="Uracil-DNA_glycosylase-like"/>
</dbReference>
<dbReference type="InterPro" id="IPR036895">
    <property type="entry name" value="Uracil-DNA_glycosylase-like_sf"/>
</dbReference>
<dbReference type="NCBIfam" id="NF007570">
    <property type="entry name" value="PRK10201.1"/>
    <property type="match status" value="1"/>
</dbReference>
<dbReference type="PANTHER" id="PTHR12159">
    <property type="entry name" value="G/T AND G/U MISMATCH-SPECIFIC DNA GLYCOSYLASE"/>
    <property type="match status" value="1"/>
</dbReference>
<dbReference type="PANTHER" id="PTHR12159:SF9">
    <property type="entry name" value="G_T MISMATCH-SPECIFIC THYMINE DNA GLYCOSYLASE"/>
    <property type="match status" value="1"/>
</dbReference>
<dbReference type="Pfam" id="PF03167">
    <property type="entry name" value="UDG"/>
    <property type="match status" value="1"/>
</dbReference>
<dbReference type="SUPFAM" id="SSF52141">
    <property type="entry name" value="Uracil-DNA glycosylase-like"/>
    <property type="match status" value="1"/>
</dbReference>